<gene>
    <name type="primary">Arel1</name>
    <name type="synonym">Kiaa0317</name>
</gene>
<protein>
    <recommendedName>
        <fullName>Apoptosis-resistant E3 ubiquitin protein ligase 1</fullName>
        <ecNumber evidence="1">2.3.2.26</ecNumber>
    </recommendedName>
    <alternativeName>
        <fullName>Apoptosis-resistant HECT-type E3 ubiquitin transferase 1</fullName>
    </alternativeName>
</protein>
<dbReference type="EC" id="2.3.2.26" evidence="1"/>
<dbReference type="EMBL" id="AB093230">
    <property type="protein sequence ID" value="BAC41414.1"/>
    <property type="status" value="ALT_INIT"/>
    <property type="molecule type" value="mRNA"/>
</dbReference>
<dbReference type="EMBL" id="AK077015">
    <property type="protein sequence ID" value="BAC36566.1"/>
    <property type="molecule type" value="mRNA"/>
</dbReference>
<dbReference type="EMBL" id="BC049900">
    <property type="protein sequence ID" value="AAH49900.1"/>
    <property type="molecule type" value="mRNA"/>
</dbReference>
<dbReference type="EMBL" id="BC060658">
    <property type="protein sequence ID" value="AAH60658.1"/>
    <property type="molecule type" value="mRNA"/>
</dbReference>
<dbReference type="CCDS" id="CCDS26051.1"/>
<dbReference type="RefSeq" id="NP_001351118.1">
    <property type="nucleotide sequence ID" value="NM_001364189.1"/>
</dbReference>
<dbReference type="RefSeq" id="NP_001351119.1">
    <property type="nucleotide sequence ID" value="NM_001364190.1"/>
</dbReference>
<dbReference type="RefSeq" id="NP_835166.3">
    <property type="nucleotide sequence ID" value="NM_178065.4"/>
</dbReference>
<dbReference type="RefSeq" id="XP_006516252.1">
    <property type="nucleotide sequence ID" value="XM_006516189.3"/>
</dbReference>
<dbReference type="RefSeq" id="XP_006516253.1">
    <property type="nucleotide sequence ID" value="XM_006516190.2"/>
</dbReference>
<dbReference type="RefSeq" id="XP_030102751.1">
    <property type="nucleotide sequence ID" value="XM_030246891.1"/>
</dbReference>
<dbReference type="RefSeq" id="XP_036013493.1">
    <property type="nucleotide sequence ID" value="XM_036157600.1"/>
</dbReference>
<dbReference type="SMR" id="Q8CHG5"/>
<dbReference type="BioGRID" id="212887">
    <property type="interactions" value="1"/>
</dbReference>
<dbReference type="FunCoup" id="Q8CHG5">
    <property type="interactions" value="3237"/>
</dbReference>
<dbReference type="STRING" id="10090.ENSMUSP00000048780"/>
<dbReference type="iPTMnet" id="Q8CHG5"/>
<dbReference type="PhosphoSitePlus" id="Q8CHG5"/>
<dbReference type="jPOST" id="Q8CHG5"/>
<dbReference type="PaxDb" id="10090-ENSMUSP00000048780"/>
<dbReference type="ProteomicsDB" id="273919"/>
<dbReference type="Antibodypedia" id="25651">
    <property type="antibodies" value="59 antibodies from 17 providers"/>
</dbReference>
<dbReference type="DNASU" id="68497"/>
<dbReference type="Ensembl" id="ENSMUST00000043169.14">
    <property type="protein sequence ID" value="ENSMUSP00000048780.8"/>
    <property type="gene ID" value="ENSMUSG00000042350.14"/>
</dbReference>
<dbReference type="GeneID" id="68497"/>
<dbReference type="KEGG" id="mmu:68497"/>
<dbReference type="UCSC" id="uc007ofy.1">
    <property type="organism name" value="mouse"/>
</dbReference>
<dbReference type="AGR" id="MGI:1915747"/>
<dbReference type="CTD" id="9870"/>
<dbReference type="MGI" id="MGI:1915747">
    <property type="gene designation" value="Arel1"/>
</dbReference>
<dbReference type="VEuPathDB" id="HostDB:ENSMUSG00000042350"/>
<dbReference type="eggNOG" id="KOG0939">
    <property type="taxonomic scope" value="Eukaryota"/>
</dbReference>
<dbReference type="GeneTree" id="ENSGT00940000156723"/>
<dbReference type="HOGENOM" id="CLU_014403_0_0_1"/>
<dbReference type="InParanoid" id="Q8CHG5"/>
<dbReference type="OMA" id="GHLCKDA"/>
<dbReference type="OrthoDB" id="6057829at2759"/>
<dbReference type="PhylomeDB" id="Q8CHG5"/>
<dbReference type="TreeFam" id="TF323417"/>
<dbReference type="Reactome" id="R-MMU-983168">
    <property type="pathway name" value="Antigen processing: Ubiquitination &amp; Proteasome degradation"/>
</dbReference>
<dbReference type="UniPathway" id="UPA00143"/>
<dbReference type="BioGRID-ORCS" id="68497">
    <property type="hits" value="3 hits in 79 CRISPR screens"/>
</dbReference>
<dbReference type="ChiTaRS" id="Arel1">
    <property type="organism name" value="mouse"/>
</dbReference>
<dbReference type="PRO" id="PR:Q8CHG5"/>
<dbReference type="Proteomes" id="UP000000589">
    <property type="component" value="Chromosome 12"/>
</dbReference>
<dbReference type="RNAct" id="Q8CHG5">
    <property type="molecule type" value="protein"/>
</dbReference>
<dbReference type="Bgee" id="ENSMUSG00000042350">
    <property type="expression patterns" value="Expressed in olfactory tubercle and 225 other cell types or tissues"/>
</dbReference>
<dbReference type="ExpressionAtlas" id="Q8CHG5">
    <property type="expression patterns" value="baseline and differential"/>
</dbReference>
<dbReference type="GO" id="GO:0005829">
    <property type="term" value="C:cytosol"/>
    <property type="evidence" value="ECO:0000250"/>
    <property type="project" value="UniProtKB"/>
</dbReference>
<dbReference type="GO" id="GO:0061630">
    <property type="term" value="F:ubiquitin protein ligase activity"/>
    <property type="evidence" value="ECO:0000250"/>
    <property type="project" value="UniProtKB"/>
</dbReference>
<dbReference type="GO" id="GO:0004842">
    <property type="term" value="F:ubiquitin-protein transferase activity"/>
    <property type="evidence" value="ECO:0000250"/>
    <property type="project" value="UniProtKB"/>
</dbReference>
<dbReference type="GO" id="GO:0006915">
    <property type="term" value="P:apoptotic process"/>
    <property type="evidence" value="ECO:0007669"/>
    <property type="project" value="UniProtKB-KW"/>
</dbReference>
<dbReference type="GO" id="GO:0043066">
    <property type="term" value="P:negative regulation of apoptotic process"/>
    <property type="evidence" value="ECO:0000250"/>
    <property type="project" value="UniProtKB"/>
</dbReference>
<dbReference type="GO" id="GO:0070979">
    <property type="term" value="P:protein K11-linked ubiquitination"/>
    <property type="evidence" value="ECO:0000250"/>
    <property type="project" value="UniProtKB"/>
</dbReference>
<dbReference type="GO" id="GO:1990390">
    <property type="term" value="P:protein K33-linked ubiquitination"/>
    <property type="evidence" value="ECO:0000250"/>
    <property type="project" value="UniProtKB"/>
</dbReference>
<dbReference type="GO" id="GO:0016567">
    <property type="term" value="P:protein ubiquitination"/>
    <property type="evidence" value="ECO:0000315"/>
    <property type="project" value="UniProtKB"/>
</dbReference>
<dbReference type="GO" id="GO:0050727">
    <property type="term" value="P:regulation of inflammatory response"/>
    <property type="evidence" value="ECO:0000315"/>
    <property type="project" value="UniProtKB"/>
</dbReference>
<dbReference type="GO" id="GO:0006511">
    <property type="term" value="P:ubiquitin-dependent protein catabolic process"/>
    <property type="evidence" value="ECO:0000314"/>
    <property type="project" value="CACAO"/>
</dbReference>
<dbReference type="CDD" id="cd00078">
    <property type="entry name" value="HECTc"/>
    <property type="match status" value="1"/>
</dbReference>
<dbReference type="FunFam" id="2.60.40.10:FF:000330">
    <property type="entry name" value="Apoptosis resistant E3 ubiquitin protein ligase 1"/>
    <property type="match status" value="1"/>
</dbReference>
<dbReference type="FunFam" id="3.30.2160.10:FF:000008">
    <property type="entry name" value="Apoptosis-resistant E3 ubiquitin protein ligase 1"/>
    <property type="match status" value="1"/>
</dbReference>
<dbReference type="FunFam" id="3.30.2410.10:FF:000013">
    <property type="entry name" value="Apoptosis-resistant E3 ubiquitin protein ligase 1"/>
    <property type="match status" value="1"/>
</dbReference>
<dbReference type="FunFam" id="3.90.1750.10:FF:000013">
    <property type="entry name" value="Apoptosis-resistant E3 ubiquitin protein ligase 1"/>
    <property type="match status" value="1"/>
</dbReference>
<dbReference type="Gene3D" id="3.30.2160.10">
    <property type="entry name" value="Hect, E3 ligase catalytic domain"/>
    <property type="match status" value="1"/>
</dbReference>
<dbReference type="Gene3D" id="3.30.2410.10">
    <property type="entry name" value="Hect, E3 ligase catalytic domain"/>
    <property type="match status" value="1"/>
</dbReference>
<dbReference type="Gene3D" id="3.90.1750.10">
    <property type="entry name" value="Hect, E3 ligase catalytic domains"/>
    <property type="match status" value="1"/>
</dbReference>
<dbReference type="Gene3D" id="2.60.40.10">
    <property type="entry name" value="Immunoglobulins"/>
    <property type="match status" value="1"/>
</dbReference>
<dbReference type="InterPro" id="IPR050409">
    <property type="entry name" value="E3_ubiq-protein_ligase"/>
</dbReference>
<dbReference type="InterPro" id="IPR017868">
    <property type="entry name" value="Filamin/ABP280_repeat-like"/>
</dbReference>
<dbReference type="InterPro" id="IPR000569">
    <property type="entry name" value="HECT_dom"/>
</dbReference>
<dbReference type="InterPro" id="IPR035983">
    <property type="entry name" value="Hect_E3_ubiquitin_ligase"/>
</dbReference>
<dbReference type="InterPro" id="IPR013783">
    <property type="entry name" value="Ig-like_fold"/>
</dbReference>
<dbReference type="InterPro" id="IPR014756">
    <property type="entry name" value="Ig_E-set"/>
</dbReference>
<dbReference type="PANTHER" id="PTHR11254:SF340">
    <property type="entry name" value="APOPTOSIS-RESISTANT E3 UBIQUITIN PROTEIN LIGASE 1"/>
    <property type="match status" value="1"/>
</dbReference>
<dbReference type="PANTHER" id="PTHR11254">
    <property type="entry name" value="HECT DOMAIN UBIQUITIN-PROTEIN LIGASE"/>
    <property type="match status" value="1"/>
</dbReference>
<dbReference type="Pfam" id="PF00630">
    <property type="entry name" value="Filamin"/>
    <property type="match status" value="1"/>
</dbReference>
<dbReference type="Pfam" id="PF00632">
    <property type="entry name" value="HECT"/>
    <property type="match status" value="1"/>
</dbReference>
<dbReference type="SMART" id="SM00119">
    <property type="entry name" value="HECTc"/>
    <property type="match status" value="1"/>
</dbReference>
<dbReference type="SUPFAM" id="SSF81296">
    <property type="entry name" value="E set domains"/>
    <property type="match status" value="1"/>
</dbReference>
<dbReference type="SUPFAM" id="SSF56204">
    <property type="entry name" value="Hect, E3 ligase catalytic domain"/>
    <property type="match status" value="1"/>
</dbReference>
<dbReference type="PROSITE" id="PS50194">
    <property type="entry name" value="FILAMIN_REPEAT"/>
    <property type="match status" value="1"/>
</dbReference>
<dbReference type="PROSITE" id="PS50237">
    <property type="entry name" value="HECT"/>
    <property type="match status" value="1"/>
</dbReference>
<sequence length="823" mass="94199">MFYVIGGIIVSVVAFFFTIKFLFELAARVVSFLQNEDRERRGDRTIYDYVRGNYLDPRSCKVSWDWKDPYEVGHSMAFRVHLFYKNGQPFPAHRPVGLRVHISHVELAVDIPVTQEVLQEPNSNVVKVAFTVRKAGRYEITVKLGGLNVAYSPYYKIFQPGMVVPSKTKIVCHFSTLVLTCGQPHTLQIVPRDEYDNPTNNSMSLRDEHSYSLAIHELGPQEEENNEVSFEKSVTSNRQTCQVFLRLTLHSRGCFHACISYQNQPINNGEFDIIVLSENEKNIVERNVSTSGVSIYFEAYLYNANNCTSTPWHLPPMHMSSSQRRPSTAIEEDDEDSPSECHTPEKVKKPKKVYCYVSPKQFSVKEFYLKIIPWRLYTFRVCPGTKFSYLGPDPVHKLLTLVVDDGIQPPVELSCKERNILAATFIRSLHKNIGGSETFQDKVNFFQRELRQVHMKRPHSKVTLKVSRHALLESSLKATRNFSISDWSKNFEVVFQDEEALDWGGPRREWFELICKALFDTTSQLFARFTDSNQALVHPNPNRPAHLRLKMYEFAGRLVGKCLYESSLGGAYKQLVRARFTRSFLAQIIGLRMHYKYFETDDPEFYKSKVCFILNNDMSEMELVFAEEKYNKSGQLDKIVELMTGGAQTPVTNANKIFYLNLLAQYRLASQVKEEVEHFLKGLNELVPENLLAIFDENELELLMCGTGDINVSDFKAHAVVVGGSWHFREKVMRWFWAVVSSLTQEELARLLQFTTGSSQLPPGGFAALCPSFQIIAAPTHSTLPTAHTCFNQLCLPTYDSYEEVHRMLQLAISEGCEGFGML</sequence>
<feature type="chain" id="PRO_0000120350" description="Apoptosis-resistant E3 ubiquitin protein ligase 1">
    <location>
        <begin position="1"/>
        <end position="823"/>
    </location>
</feature>
<feature type="repeat" description="Filamin">
    <location>
        <begin position="64"/>
        <end position="158"/>
    </location>
</feature>
<feature type="domain" description="HECT" evidence="2">
    <location>
        <begin position="483"/>
        <end position="823"/>
    </location>
</feature>
<feature type="region of interest" description="Disordered" evidence="3">
    <location>
        <begin position="315"/>
        <end position="345"/>
    </location>
</feature>
<feature type="region of interest" description="Interaction with SOCS2" evidence="1">
    <location>
        <begin position="483"/>
        <end position="789"/>
    </location>
</feature>
<feature type="active site" description="Glycyl thioester intermediate" evidence="2">
    <location>
        <position position="790"/>
    </location>
</feature>
<feature type="sequence conflict" description="In Ref. 3; AAH60658." evidence="6" ref="3">
    <original>T</original>
    <variation>I</variation>
    <location>
        <position position="424"/>
    </location>
</feature>
<evidence type="ECO:0000250" key="1">
    <source>
        <dbReference type="UniProtKB" id="O15033"/>
    </source>
</evidence>
<evidence type="ECO:0000255" key="2">
    <source>
        <dbReference type="PROSITE-ProRule" id="PRU00104"/>
    </source>
</evidence>
<evidence type="ECO:0000256" key="3">
    <source>
        <dbReference type="SAM" id="MobiDB-lite"/>
    </source>
</evidence>
<evidence type="ECO:0000269" key="4">
    <source>
    </source>
</evidence>
<evidence type="ECO:0000269" key="5">
    <source>
    </source>
</evidence>
<evidence type="ECO:0000305" key="6"/>
<reference key="1">
    <citation type="journal article" date="2002" name="DNA Res.">
        <title>Prediction of the coding sequences of mouse homologues of KIAA gene: I. The complete nucleotide sequences of 100 mouse KIAA-homologous cDNAs identified by screening of terminal sequences of cDNA clones randomly sampled from size-fractionated libraries.</title>
        <authorList>
            <person name="Okazaki N."/>
            <person name="Kikuno R."/>
            <person name="Ohara R."/>
            <person name="Inamoto S."/>
            <person name="Hara Y."/>
            <person name="Nagase T."/>
            <person name="Ohara O."/>
            <person name="Koga H."/>
        </authorList>
    </citation>
    <scope>NUCLEOTIDE SEQUENCE [LARGE SCALE MRNA]</scope>
    <source>
        <tissue>Brain</tissue>
    </source>
</reference>
<reference key="2">
    <citation type="journal article" date="2005" name="Science">
        <title>The transcriptional landscape of the mammalian genome.</title>
        <authorList>
            <person name="Carninci P."/>
            <person name="Kasukawa T."/>
            <person name="Katayama S."/>
            <person name="Gough J."/>
            <person name="Frith M.C."/>
            <person name="Maeda N."/>
            <person name="Oyama R."/>
            <person name="Ravasi T."/>
            <person name="Lenhard B."/>
            <person name="Wells C."/>
            <person name="Kodzius R."/>
            <person name="Shimokawa K."/>
            <person name="Bajic V.B."/>
            <person name="Brenner S.E."/>
            <person name="Batalov S."/>
            <person name="Forrest A.R."/>
            <person name="Zavolan M."/>
            <person name="Davis M.J."/>
            <person name="Wilming L.G."/>
            <person name="Aidinis V."/>
            <person name="Allen J.E."/>
            <person name="Ambesi-Impiombato A."/>
            <person name="Apweiler R."/>
            <person name="Aturaliya R.N."/>
            <person name="Bailey T.L."/>
            <person name="Bansal M."/>
            <person name="Baxter L."/>
            <person name="Beisel K.W."/>
            <person name="Bersano T."/>
            <person name="Bono H."/>
            <person name="Chalk A.M."/>
            <person name="Chiu K.P."/>
            <person name="Choudhary V."/>
            <person name="Christoffels A."/>
            <person name="Clutterbuck D.R."/>
            <person name="Crowe M.L."/>
            <person name="Dalla E."/>
            <person name="Dalrymple B.P."/>
            <person name="de Bono B."/>
            <person name="Della Gatta G."/>
            <person name="di Bernardo D."/>
            <person name="Down T."/>
            <person name="Engstrom P."/>
            <person name="Fagiolini M."/>
            <person name="Faulkner G."/>
            <person name="Fletcher C.F."/>
            <person name="Fukushima T."/>
            <person name="Furuno M."/>
            <person name="Futaki S."/>
            <person name="Gariboldi M."/>
            <person name="Georgii-Hemming P."/>
            <person name="Gingeras T.R."/>
            <person name="Gojobori T."/>
            <person name="Green R.E."/>
            <person name="Gustincich S."/>
            <person name="Harbers M."/>
            <person name="Hayashi Y."/>
            <person name="Hensch T.K."/>
            <person name="Hirokawa N."/>
            <person name="Hill D."/>
            <person name="Huminiecki L."/>
            <person name="Iacono M."/>
            <person name="Ikeo K."/>
            <person name="Iwama A."/>
            <person name="Ishikawa T."/>
            <person name="Jakt M."/>
            <person name="Kanapin A."/>
            <person name="Katoh M."/>
            <person name="Kawasawa Y."/>
            <person name="Kelso J."/>
            <person name="Kitamura H."/>
            <person name="Kitano H."/>
            <person name="Kollias G."/>
            <person name="Krishnan S.P."/>
            <person name="Kruger A."/>
            <person name="Kummerfeld S.K."/>
            <person name="Kurochkin I.V."/>
            <person name="Lareau L.F."/>
            <person name="Lazarevic D."/>
            <person name="Lipovich L."/>
            <person name="Liu J."/>
            <person name="Liuni S."/>
            <person name="McWilliam S."/>
            <person name="Madan Babu M."/>
            <person name="Madera M."/>
            <person name="Marchionni L."/>
            <person name="Matsuda H."/>
            <person name="Matsuzawa S."/>
            <person name="Miki H."/>
            <person name="Mignone F."/>
            <person name="Miyake S."/>
            <person name="Morris K."/>
            <person name="Mottagui-Tabar S."/>
            <person name="Mulder N."/>
            <person name="Nakano N."/>
            <person name="Nakauchi H."/>
            <person name="Ng P."/>
            <person name="Nilsson R."/>
            <person name="Nishiguchi S."/>
            <person name="Nishikawa S."/>
            <person name="Nori F."/>
            <person name="Ohara O."/>
            <person name="Okazaki Y."/>
            <person name="Orlando V."/>
            <person name="Pang K.C."/>
            <person name="Pavan W.J."/>
            <person name="Pavesi G."/>
            <person name="Pesole G."/>
            <person name="Petrovsky N."/>
            <person name="Piazza S."/>
            <person name="Reed J."/>
            <person name="Reid J.F."/>
            <person name="Ring B.Z."/>
            <person name="Ringwald M."/>
            <person name="Rost B."/>
            <person name="Ruan Y."/>
            <person name="Salzberg S.L."/>
            <person name="Sandelin A."/>
            <person name="Schneider C."/>
            <person name="Schoenbach C."/>
            <person name="Sekiguchi K."/>
            <person name="Semple C.A."/>
            <person name="Seno S."/>
            <person name="Sessa L."/>
            <person name="Sheng Y."/>
            <person name="Shibata Y."/>
            <person name="Shimada H."/>
            <person name="Shimada K."/>
            <person name="Silva D."/>
            <person name="Sinclair B."/>
            <person name="Sperling S."/>
            <person name="Stupka E."/>
            <person name="Sugiura K."/>
            <person name="Sultana R."/>
            <person name="Takenaka Y."/>
            <person name="Taki K."/>
            <person name="Tammoja K."/>
            <person name="Tan S.L."/>
            <person name="Tang S."/>
            <person name="Taylor M.S."/>
            <person name="Tegner J."/>
            <person name="Teichmann S.A."/>
            <person name="Ueda H.R."/>
            <person name="van Nimwegen E."/>
            <person name="Verardo R."/>
            <person name="Wei C.L."/>
            <person name="Yagi K."/>
            <person name="Yamanishi H."/>
            <person name="Zabarovsky E."/>
            <person name="Zhu S."/>
            <person name="Zimmer A."/>
            <person name="Hide W."/>
            <person name="Bult C."/>
            <person name="Grimmond S.M."/>
            <person name="Teasdale R.D."/>
            <person name="Liu E.T."/>
            <person name="Brusic V."/>
            <person name="Quackenbush J."/>
            <person name="Wahlestedt C."/>
            <person name="Mattick J.S."/>
            <person name="Hume D.A."/>
            <person name="Kai C."/>
            <person name="Sasaki D."/>
            <person name="Tomaru Y."/>
            <person name="Fukuda S."/>
            <person name="Kanamori-Katayama M."/>
            <person name="Suzuki M."/>
            <person name="Aoki J."/>
            <person name="Arakawa T."/>
            <person name="Iida J."/>
            <person name="Imamura K."/>
            <person name="Itoh M."/>
            <person name="Kato T."/>
            <person name="Kawaji H."/>
            <person name="Kawagashira N."/>
            <person name="Kawashima T."/>
            <person name="Kojima M."/>
            <person name="Kondo S."/>
            <person name="Konno H."/>
            <person name="Nakano K."/>
            <person name="Ninomiya N."/>
            <person name="Nishio T."/>
            <person name="Okada M."/>
            <person name="Plessy C."/>
            <person name="Shibata K."/>
            <person name="Shiraki T."/>
            <person name="Suzuki S."/>
            <person name="Tagami M."/>
            <person name="Waki K."/>
            <person name="Watahiki A."/>
            <person name="Okamura-Oho Y."/>
            <person name="Suzuki H."/>
            <person name="Kawai J."/>
            <person name="Hayashizaki Y."/>
        </authorList>
    </citation>
    <scope>NUCLEOTIDE SEQUENCE [LARGE SCALE MRNA]</scope>
    <source>
        <strain>C57BL/6J</strain>
        <tissue>Testis</tissue>
    </source>
</reference>
<reference key="3">
    <citation type="journal article" date="2004" name="Genome Res.">
        <title>The status, quality, and expansion of the NIH full-length cDNA project: the Mammalian Gene Collection (MGC).</title>
        <authorList>
            <consortium name="The MGC Project Team"/>
        </authorList>
    </citation>
    <scope>NUCLEOTIDE SEQUENCE [LARGE SCALE MRNA]</scope>
    <source>
        <strain>C57BL/6J</strain>
        <tissue>Brain</tissue>
        <tissue>Eye</tissue>
    </source>
</reference>
<reference key="4">
    <citation type="journal article" date="2013" name="J. Biol. Chem.">
        <title>Identification of a novel anti-apoptotic E3 ubiquitin ligase that ubiquitinates antagonists of inhibitor of apoptosis proteins SMAC, HtrA2, and ARTS.</title>
        <authorList>
            <person name="Kim J.B."/>
            <person name="Kim S.Y."/>
            <person name="Kim B.M."/>
            <person name="Lee H."/>
            <person name="Kim I."/>
            <person name="Yun J."/>
            <person name="Jo Y."/>
            <person name="Oh T."/>
            <person name="Jo Y."/>
            <person name="Chae H.D."/>
            <person name="Shin D.Y."/>
        </authorList>
    </citation>
    <scope>INTERACTION WITH SEPTIN4; HTRA2 AND DIABLO</scope>
    <scope>TISSUE SPECIFICITY</scope>
</reference>
<reference key="5">
    <citation type="journal article" date="2019" name="JCI Insight">
        <title>KIAA0317 regulates pulmonary inflammation through SOCS2 degradation.</title>
        <authorList>
            <person name="Lear T.B."/>
            <person name="McKelvey A.C."/>
            <person name="Evankovich J.W."/>
            <person name="Rajbhandari S."/>
            <person name="Coon T.A."/>
            <person name="Dunn S.R."/>
            <person name="Londino J.D."/>
            <person name="McVerry B.J."/>
            <person name="Zhang Y."/>
            <person name="Valenzi E."/>
            <person name="Burton C.L."/>
            <person name="Gordon R."/>
            <person name="Gingras S."/>
            <person name="Lockwood K.C."/>
            <person name="Jurczak M.J."/>
            <person name="Lafyatis R."/>
            <person name="Shlomchik M.J."/>
            <person name="Liu Y."/>
            <person name="Chen B.B."/>
        </authorList>
    </citation>
    <scope>FUNCTION</scope>
    <scope>DISRUPTION PHENOTYPE</scope>
    <scope>INTERACTION WITH SOCS2</scope>
</reference>
<keyword id="KW-0053">Apoptosis</keyword>
<keyword id="KW-1185">Reference proteome</keyword>
<keyword id="KW-0808">Transferase</keyword>
<keyword id="KW-0832">Ubl conjugation</keyword>
<keyword id="KW-0833">Ubl conjugation pathway</keyword>
<proteinExistence type="evidence at protein level"/>
<comment type="function">
    <text evidence="1 5">E3 ubiquitin-protein ligase that catalyzes 'Lys-11'- or 'Lys-33'-linked polyubiquitin chains, with some preference for 'Lys-33' linkages (By similarity). E3 ubiquitin-protein ligases accept ubiquitin from an E2 ubiquitin-conjugating enzyme in the form of a thioester and then directly transfers the ubiquitin to targeted substrates (By similarity). Ubiquitinates SEPTIN4, DIABLO/SMAC and HTRA2 in vitro (By similarity). Modulates pulmonary inflammation by targeting SOCS2 for ubiquitination and subsequent degradation by the proteasome (PubMed:31578312).</text>
</comment>
<comment type="catalytic activity">
    <reaction evidence="1">
        <text>S-ubiquitinyl-[E2 ubiquitin-conjugating enzyme]-L-cysteine + [acceptor protein]-L-lysine = [E2 ubiquitin-conjugating enzyme]-L-cysteine + N(6)-ubiquitinyl-[acceptor protein]-L-lysine.</text>
        <dbReference type="EC" id="2.3.2.26"/>
    </reaction>
</comment>
<comment type="pathway">
    <text evidence="1">Protein modification; protein ubiquitination.</text>
</comment>
<comment type="subunit">
    <text evidence="4 5">Interacts with SOCS2 (PubMed:31578312). Interacts (via HECT domain) with HTRA2, DIABLO/SMAC and SEPTIN4; in the cytoplasm following induction of apoptosis (PubMed:23479728).</text>
</comment>
<comment type="tissue specificity">
    <text evidence="4">Detected in brain, testis, heart, liver, lung and kidney with very low levels in skeletal muscle and spleen.</text>
</comment>
<comment type="PTM">
    <text evidence="1">Autoubiquitinated in vitro in the presence of E2 enzyme UBE2D1/UBCH5A.</text>
</comment>
<comment type="disruption phenotype">
    <text evidence="5">Mice show significant and stepwise decreases in indicators of inflammatory injury, such as bronchoalveolar lavage fluid protein concentration and cell count, as well as decreases in pro-inflammatory cytokine release.</text>
</comment>
<comment type="sequence caution" evidence="6">
    <conflict type="erroneous initiation">
        <sequence resource="EMBL-CDS" id="BAC41414"/>
    </conflict>
    <text>Extended N-terminus.</text>
</comment>
<name>AREL1_MOUSE</name>
<accession>Q8CHG5</accession>
<accession>Q6P9Q1</accession>
<accession>Q80YC4</accession>
<accession>Q8C5W5</accession>
<organism>
    <name type="scientific">Mus musculus</name>
    <name type="common">Mouse</name>
    <dbReference type="NCBI Taxonomy" id="10090"/>
    <lineage>
        <taxon>Eukaryota</taxon>
        <taxon>Metazoa</taxon>
        <taxon>Chordata</taxon>
        <taxon>Craniata</taxon>
        <taxon>Vertebrata</taxon>
        <taxon>Euteleostomi</taxon>
        <taxon>Mammalia</taxon>
        <taxon>Eutheria</taxon>
        <taxon>Euarchontoglires</taxon>
        <taxon>Glires</taxon>
        <taxon>Rodentia</taxon>
        <taxon>Myomorpha</taxon>
        <taxon>Muroidea</taxon>
        <taxon>Muridae</taxon>
        <taxon>Murinae</taxon>
        <taxon>Mus</taxon>
        <taxon>Mus</taxon>
    </lineage>
</organism>